<organism>
    <name type="scientific">Borreliella afzelii (strain PKo)</name>
    <name type="common">Borrelia afzelii</name>
    <dbReference type="NCBI Taxonomy" id="390236"/>
    <lineage>
        <taxon>Bacteria</taxon>
        <taxon>Pseudomonadati</taxon>
        <taxon>Spirochaetota</taxon>
        <taxon>Spirochaetia</taxon>
        <taxon>Spirochaetales</taxon>
        <taxon>Borreliaceae</taxon>
        <taxon>Borreliella</taxon>
    </lineage>
</organism>
<gene>
    <name evidence="1" type="primary">nusB</name>
    <name type="ordered locus">BAPKO_0108</name>
    <name type="ordered locus">BafPKo_0105</name>
</gene>
<name>NUSB_BORAP</name>
<comment type="function">
    <text evidence="1">Involved in transcription antitermination. Required for transcription of ribosomal RNA (rRNA) genes. Binds specifically to the boxA antiterminator sequence of the ribosomal RNA (rrn) operons.</text>
</comment>
<comment type="similarity">
    <text evidence="1">Belongs to the NusB family.</text>
</comment>
<sequence>MHEVRVLAFQKIYSIDINQSAMDDIFDIFNIEDKGLDIENESIKSFYSSLVNGTFNNLEHIDSLIRDISWNWSLDRMDKVDLAILRMGVYSLKFQNFENSKRAVIDDAILIAKKYGSKNSCKFINGILDALLKNMEN</sequence>
<reference key="1">
    <citation type="journal article" date="2006" name="BMC Genomics">
        <title>Comparative genome analysis: selection pressure on the Borrelia vls cassettes is essential for infectivity.</title>
        <authorList>
            <person name="Gloeckner G."/>
            <person name="Schulte-Spechtel U."/>
            <person name="Schilhabel M."/>
            <person name="Felder M."/>
            <person name="Suehnel J."/>
            <person name="Wilske B."/>
            <person name="Platzer M."/>
        </authorList>
    </citation>
    <scope>NUCLEOTIDE SEQUENCE [LARGE SCALE GENOMIC DNA]</scope>
    <source>
        <strain>PKo</strain>
    </source>
</reference>
<reference key="2">
    <citation type="journal article" date="2011" name="J. Bacteriol.">
        <title>Whole-genome sequences of two Borrelia afzelii and two Borrelia garinii Lyme disease agent isolates.</title>
        <authorList>
            <person name="Casjens S.R."/>
            <person name="Mongodin E.F."/>
            <person name="Qiu W.G."/>
            <person name="Dunn J.J."/>
            <person name="Luft B.J."/>
            <person name="Fraser-Liggett C.M."/>
            <person name="Schutzer S.E."/>
        </authorList>
    </citation>
    <scope>NUCLEOTIDE SEQUENCE [LARGE SCALE GENOMIC DNA]</scope>
    <source>
        <strain>PKo</strain>
    </source>
</reference>
<proteinExistence type="inferred from homology"/>
<protein>
    <recommendedName>
        <fullName evidence="1">Transcription antitermination protein NusB</fullName>
    </recommendedName>
    <alternativeName>
        <fullName evidence="1">Antitermination factor NusB</fullName>
    </alternativeName>
</protein>
<accession>Q0SP57</accession>
<accession>G0IQV2</accession>
<feature type="chain" id="PRO_0000265491" description="Transcription antitermination protein NusB">
    <location>
        <begin position="1"/>
        <end position="137"/>
    </location>
</feature>
<dbReference type="EMBL" id="CP000395">
    <property type="protein sequence ID" value="ABH01371.1"/>
    <property type="molecule type" value="Genomic_DNA"/>
</dbReference>
<dbReference type="EMBL" id="CP002933">
    <property type="protein sequence ID" value="AEL69338.1"/>
    <property type="molecule type" value="Genomic_DNA"/>
</dbReference>
<dbReference type="RefSeq" id="WP_011600838.1">
    <property type="nucleotide sequence ID" value="NZ_CP160066.1"/>
</dbReference>
<dbReference type="SMR" id="Q0SP57"/>
<dbReference type="STRING" id="29518.BLA32_03755"/>
<dbReference type="GeneID" id="77264949"/>
<dbReference type="KEGG" id="baf:BAPKO_0108"/>
<dbReference type="KEGG" id="bafz:BafPKo_0105"/>
<dbReference type="PATRIC" id="fig|390236.22.peg.104"/>
<dbReference type="eggNOG" id="COG0781">
    <property type="taxonomic scope" value="Bacteria"/>
</dbReference>
<dbReference type="HOGENOM" id="CLU_087843_3_1_12"/>
<dbReference type="OrthoDB" id="9811381at2"/>
<dbReference type="Proteomes" id="UP000005216">
    <property type="component" value="Chromosome"/>
</dbReference>
<dbReference type="GO" id="GO:0005829">
    <property type="term" value="C:cytosol"/>
    <property type="evidence" value="ECO:0007669"/>
    <property type="project" value="TreeGrafter"/>
</dbReference>
<dbReference type="GO" id="GO:0003723">
    <property type="term" value="F:RNA binding"/>
    <property type="evidence" value="ECO:0007669"/>
    <property type="project" value="UniProtKB-UniRule"/>
</dbReference>
<dbReference type="GO" id="GO:0006353">
    <property type="term" value="P:DNA-templated transcription termination"/>
    <property type="evidence" value="ECO:0007669"/>
    <property type="project" value="UniProtKB-UniRule"/>
</dbReference>
<dbReference type="GO" id="GO:0031564">
    <property type="term" value="P:transcription antitermination"/>
    <property type="evidence" value="ECO:0007669"/>
    <property type="project" value="UniProtKB-KW"/>
</dbReference>
<dbReference type="CDD" id="cd00619">
    <property type="entry name" value="Terminator_NusB"/>
    <property type="match status" value="1"/>
</dbReference>
<dbReference type="Gene3D" id="1.10.940.10">
    <property type="entry name" value="NusB-like"/>
    <property type="match status" value="1"/>
</dbReference>
<dbReference type="HAMAP" id="MF_00073">
    <property type="entry name" value="NusB"/>
    <property type="match status" value="1"/>
</dbReference>
<dbReference type="InterPro" id="IPR035926">
    <property type="entry name" value="NusB-like_sf"/>
</dbReference>
<dbReference type="InterPro" id="IPR011605">
    <property type="entry name" value="NusB_fam"/>
</dbReference>
<dbReference type="InterPro" id="IPR006027">
    <property type="entry name" value="NusB_RsmB_TIM44"/>
</dbReference>
<dbReference type="NCBIfam" id="TIGR01951">
    <property type="entry name" value="nusB"/>
    <property type="match status" value="1"/>
</dbReference>
<dbReference type="PANTHER" id="PTHR11078:SF3">
    <property type="entry name" value="ANTITERMINATION NUSB DOMAIN-CONTAINING PROTEIN"/>
    <property type="match status" value="1"/>
</dbReference>
<dbReference type="PANTHER" id="PTHR11078">
    <property type="entry name" value="N UTILIZATION SUBSTANCE PROTEIN B-RELATED"/>
    <property type="match status" value="1"/>
</dbReference>
<dbReference type="Pfam" id="PF01029">
    <property type="entry name" value="NusB"/>
    <property type="match status" value="1"/>
</dbReference>
<dbReference type="SUPFAM" id="SSF48013">
    <property type="entry name" value="NusB-like"/>
    <property type="match status" value="1"/>
</dbReference>
<keyword id="KW-0694">RNA-binding</keyword>
<keyword id="KW-0804">Transcription</keyword>
<keyword id="KW-0889">Transcription antitermination</keyword>
<keyword id="KW-0805">Transcription regulation</keyword>
<evidence type="ECO:0000255" key="1">
    <source>
        <dbReference type="HAMAP-Rule" id="MF_00073"/>
    </source>
</evidence>